<organism>
    <name type="scientific">Neisseria meningitidis serogroup C / serotype 2a (strain ATCC 700532 / DSM 15464 / FAM18)</name>
    <dbReference type="NCBI Taxonomy" id="272831"/>
    <lineage>
        <taxon>Bacteria</taxon>
        <taxon>Pseudomonadati</taxon>
        <taxon>Pseudomonadota</taxon>
        <taxon>Betaproteobacteria</taxon>
        <taxon>Neisseriales</taxon>
        <taxon>Neisseriaceae</taxon>
        <taxon>Neisseria</taxon>
    </lineage>
</organism>
<feature type="chain" id="PRO_1000008077" description="DNA mismatch repair protein MutS">
    <location>
        <begin position="1"/>
        <end position="864"/>
    </location>
</feature>
<feature type="binding site" evidence="1">
    <location>
        <begin position="607"/>
        <end position="614"/>
    </location>
    <ligand>
        <name>ATP</name>
        <dbReference type="ChEBI" id="CHEBI:30616"/>
    </ligand>
</feature>
<accession>A1KWM6</accession>
<name>MUTS_NEIMF</name>
<evidence type="ECO:0000255" key="1">
    <source>
        <dbReference type="HAMAP-Rule" id="MF_00096"/>
    </source>
</evidence>
<reference key="1">
    <citation type="journal article" date="2007" name="PLoS Genet.">
        <title>Meningococcal genetic variation mechanisms viewed through comparative analysis of serogroup C strain FAM18.</title>
        <authorList>
            <person name="Bentley S.D."/>
            <person name="Vernikos G.S."/>
            <person name="Snyder L.A.S."/>
            <person name="Churcher C."/>
            <person name="Arrowsmith C."/>
            <person name="Chillingworth T."/>
            <person name="Cronin A."/>
            <person name="Davis P.H."/>
            <person name="Holroyd N.E."/>
            <person name="Jagels K."/>
            <person name="Maddison M."/>
            <person name="Moule S."/>
            <person name="Rabbinowitsch E."/>
            <person name="Sharp S."/>
            <person name="Unwin L."/>
            <person name="Whitehead S."/>
            <person name="Quail M.A."/>
            <person name="Achtman M."/>
            <person name="Barrell B.G."/>
            <person name="Saunders N.J."/>
            <person name="Parkhill J."/>
        </authorList>
    </citation>
    <scope>NUCLEOTIDE SEQUENCE [LARGE SCALE GENOMIC DNA]</scope>
    <source>
        <strain>ATCC 700532 / DSM 15464 / FAM18</strain>
    </source>
</reference>
<comment type="function">
    <text evidence="1">This protein is involved in the repair of mismatches in DNA. It is possible that it carries out the mismatch recognition step. This protein has a weak ATPase activity.</text>
</comment>
<comment type="similarity">
    <text evidence="1">Belongs to the DNA mismatch repair MutS family.</text>
</comment>
<protein>
    <recommendedName>
        <fullName evidence="1">DNA mismatch repair protein MutS</fullName>
    </recommendedName>
</protein>
<gene>
    <name evidence="1" type="primary">mutS</name>
    <name type="ordered locus">NMC2138</name>
</gene>
<proteinExistence type="inferred from homology"/>
<sequence>MSKSAVSPMMQQYLGIKAQHTDKLVFYRMGDFYEMFFDDAVEAAKLLDITLTTRGQVDGEPVKMAGVPFHAAEQYLARLVKLGKSVAICEQVGEVGAGKGPVERKVVRIVTPGTLTDSALLEDKETNRIVAVSPDKKYIGLAWASLQSGEFKTKLTTVDKLDDELARLQAAEILLPDSKNAPQLQTASGVTRLNAWQFAADAGEKLLTEYFGCQDLRGFGLDGKEHAVAIGAAGALLNYIRLTQNLMPQHLDGLSLETDSQYIGMDAATRRNLEITQTLSGKKSPTLMSTLDLCATHMGSRLLALWLHHPLRNRAHIRARQEAVAALESQYKPLQCRLKNIADIERIAARIAVGNARPRDLASLRDSLFELAQIDLSANGSSLLETLKAVFPENLSTAEQLRQAILPEPSVWLKDGNVINHGFHPELDELRRIQNHGDEFLLDLEAKERERTGLSTLKVEFNRVHGFYIELSKTQAEQAPADYQRRQTLKNAERFITPELKAFEDKVLTAQEQALALEKQLFDGVLKNLQTALPQLQKAAKAAAALDVLSTFSALAKERNFVRPEFADYPVIHIENGRHPVVEQQVRHFTANHTDLDHKHRLMLLTGPNMGGKSTYMRQVALIVLLAHTGCFVPADAATIGPIDQIFTRIGASDDLASNRSTFMVEMSETAYILHHATEQSLVLMDEVGRGTSTFDGLALAHAVAEHLLQKNKSFSLFATHYFELTYLPEAHAAAVNMHLSALEQGQDIVFLHQIQPGPAGKSYGIAVAKLAGLPVRALKSAQKHLNGLENQAAANRPQLDIFSTMPSEKGDEPNVGNFVDKAEEKHFEGILAAALEKLDPDSLTPREALSELYRLKDLCKSVS</sequence>
<keyword id="KW-0067">ATP-binding</keyword>
<keyword id="KW-0227">DNA damage</keyword>
<keyword id="KW-0234">DNA repair</keyword>
<keyword id="KW-0238">DNA-binding</keyword>
<keyword id="KW-0547">Nucleotide-binding</keyword>
<dbReference type="EMBL" id="AM421808">
    <property type="protein sequence ID" value="CAM11286.1"/>
    <property type="molecule type" value="Genomic_DNA"/>
</dbReference>
<dbReference type="RefSeq" id="WP_002215177.1">
    <property type="nucleotide sequence ID" value="NC_008767.1"/>
</dbReference>
<dbReference type="SMR" id="A1KWM6"/>
<dbReference type="KEGG" id="nmc:NMC2138"/>
<dbReference type="HOGENOM" id="CLU_002472_4_1_4"/>
<dbReference type="Proteomes" id="UP000002286">
    <property type="component" value="Chromosome"/>
</dbReference>
<dbReference type="GO" id="GO:0005829">
    <property type="term" value="C:cytosol"/>
    <property type="evidence" value="ECO:0007669"/>
    <property type="project" value="TreeGrafter"/>
</dbReference>
<dbReference type="GO" id="GO:0005524">
    <property type="term" value="F:ATP binding"/>
    <property type="evidence" value="ECO:0007669"/>
    <property type="project" value="UniProtKB-UniRule"/>
</dbReference>
<dbReference type="GO" id="GO:0140664">
    <property type="term" value="F:ATP-dependent DNA damage sensor activity"/>
    <property type="evidence" value="ECO:0007669"/>
    <property type="project" value="InterPro"/>
</dbReference>
<dbReference type="GO" id="GO:0003684">
    <property type="term" value="F:damaged DNA binding"/>
    <property type="evidence" value="ECO:0007669"/>
    <property type="project" value="UniProtKB-UniRule"/>
</dbReference>
<dbReference type="GO" id="GO:0030983">
    <property type="term" value="F:mismatched DNA binding"/>
    <property type="evidence" value="ECO:0007669"/>
    <property type="project" value="InterPro"/>
</dbReference>
<dbReference type="GO" id="GO:0006298">
    <property type="term" value="P:mismatch repair"/>
    <property type="evidence" value="ECO:0007669"/>
    <property type="project" value="UniProtKB-UniRule"/>
</dbReference>
<dbReference type="CDD" id="cd03284">
    <property type="entry name" value="ABC_MutS1"/>
    <property type="match status" value="1"/>
</dbReference>
<dbReference type="FunFam" id="1.10.1420.10:FF:000018">
    <property type="entry name" value="DNA mismatch repair protein MutS"/>
    <property type="match status" value="1"/>
</dbReference>
<dbReference type="FunFam" id="3.40.1170.10:FF:000001">
    <property type="entry name" value="DNA mismatch repair protein MutS"/>
    <property type="match status" value="1"/>
</dbReference>
<dbReference type="FunFam" id="3.40.50.300:FF:000283">
    <property type="entry name" value="DNA mismatch repair protein MutS"/>
    <property type="match status" value="1"/>
</dbReference>
<dbReference type="Gene3D" id="1.10.1420.10">
    <property type="match status" value="2"/>
</dbReference>
<dbReference type="Gene3D" id="6.10.140.430">
    <property type="match status" value="1"/>
</dbReference>
<dbReference type="Gene3D" id="3.40.1170.10">
    <property type="entry name" value="DNA repair protein MutS, domain I"/>
    <property type="match status" value="1"/>
</dbReference>
<dbReference type="Gene3D" id="3.30.420.110">
    <property type="entry name" value="MutS, connector domain"/>
    <property type="match status" value="1"/>
</dbReference>
<dbReference type="Gene3D" id="3.40.50.300">
    <property type="entry name" value="P-loop containing nucleotide triphosphate hydrolases"/>
    <property type="match status" value="1"/>
</dbReference>
<dbReference type="HAMAP" id="MF_00096">
    <property type="entry name" value="MutS"/>
    <property type="match status" value="1"/>
</dbReference>
<dbReference type="InterPro" id="IPR005748">
    <property type="entry name" value="DNA_mismatch_repair_MutS"/>
</dbReference>
<dbReference type="InterPro" id="IPR007695">
    <property type="entry name" value="DNA_mismatch_repair_MutS-lik_N"/>
</dbReference>
<dbReference type="InterPro" id="IPR017261">
    <property type="entry name" value="DNA_mismatch_repair_MutS/MSH"/>
</dbReference>
<dbReference type="InterPro" id="IPR000432">
    <property type="entry name" value="DNA_mismatch_repair_MutS_C"/>
</dbReference>
<dbReference type="InterPro" id="IPR007861">
    <property type="entry name" value="DNA_mismatch_repair_MutS_clamp"/>
</dbReference>
<dbReference type="InterPro" id="IPR007696">
    <property type="entry name" value="DNA_mismatch_repair_MutS_core"/>
</dbReference>
<dbReference type="InterPro" id="IPR016151">
    <property type="entry name" value="DNA_mismatch_repair_MutS_N"/>
</dbReference>
<dbReference type="InterPro" id="IPR036187">
    <property type="entry name" value="DNA_mismatch_repair_MutS_sf"/>
</dbReference>
<dbReference type="InterPro" id="IPR007860">
    <property type="entry name" value="DNA_mmatch_repair_MutS_con_dom"/>
</dbReference>
<dbReference type="InterPro" id="IPR045076">
    <property type="entry name" value="MutS"/>
</dbReference>
<dbReference type="InterPro" id="IPR036678">
    <property type="entry name" value="MutS_con_dom_sf"/>
</dbReference>
<dbReference type="InterPro" id="IPR027417">
    <property type="entry name" value="P-loop_NTPase"/>
</dbReference>
<dbReference type="NCBIfam" id="TIGR01070">
    <property type="entry name" value="mutS1"/>
    <property type="match status" value="1"/>
</dbReference>
<dbReference type="NCBIfam" id="NF003810">
    <property type="entry name" value="PRK05399.1"/>
    <property type="match status" value="1"/>
</dbReference>
<dbReference type="PANTHER" id="PTHR11361:SF34">
    <property type="entry name" value="DNA MISMATCH REPAIR PROTEIN MSH1, MITOCHONDRIAL"/>
    <property type="match status" value="1"/>
</dbReference>
<dbReference type="PANTHER" id="PTHR11361">
    <property type="entry name" value="DNA MISMATCH REPAIR PROTEIN MUTS FAMILY MEMBER"/>
    <property type="match status" value="1"/>
</dbReference>
<dbReference type="Pfam" id="PF01624">
    <property type="entry name" value="MutS_I"/>
    <property type="match status" value="1"/>
</dbReference>
<dbReference type="Pfam" id="PF05188">
    <property type="entry name" value="MutS_II"/>
    <property type="match status" value="1"/>
</dbReference>
<dbReference type="Pfam" id="PF05192">
    <property type="entry name" value="MutS_III"/>
    <property type="match status" value="1"/>
</dbReference>
<dbReference type="Pfam" id="PF05190">
    <property type="entry name" value="MutS_IV"/>
    <property type="match status" value="1"/>
</dbReference>
<dbReference type="Pfam" id="PF00488">
    <property type="entry name" value="MutS_V"/>
    <property type="match status" value="1"/>
</dbReference>
<dbReference type="PIRSF" id="PIRSF037677">
    <property type="entry name" value="DNA_mis_repair_Msh6"/>
    <property type="match status" value="1"/>
</dbReference>
<dbReference type="SMART" id="SM00534">
    <property type="entry name" value="MUTSac"/>
    <property type="match status" value="1"/>
</dbReference>
<dbReference type="SMART" id="SM00533">
    <property type="entry name" value="MUTSd"/>
    <property type="match status" value="1"/>
</dbReference>
<dbReference type="SUPFAM" id="SSF55271">
    <property type="entry name" value="DNA repair protein MutS, domain I"/>
    <property type="match status" value="1"/>
</dbReference>
<dbReference type="SUPFAM" id="SSF53150">
    <property type="entry name" value="DNA repair protein MutS, domain II"/>
    <property type="match status" value="1"/>
</dbReference>
<dbReference type="SUPFAM" id="SSF48334">
    <property type="entry name" value="DNA repair protein MutS, domain III"/>
    <property type="match status" value="1"/>
</dbReference>
<dbReference type="SUPFAM" id="SSF52540">
    <property type="entry name" value="P-loop containing nucleoside triphosphate hydrolases"/>
    <property type="match status" value="1"/>
</dbReference>
<dbReference type="PROSITE" id="PS00486">
    <property type="entry name" value="DNA_MISMATCH_REPAIR_2"/>
    <property type="match status" value="1"/>
</dbReference>